<sequence length="476" mass="50450">MTILAPVTKSESSTDPRDPLARLENLFDPGTTVPLHARDKSGVLAASGNIDGVRTIAYCSDATVMGGAMGVDGCKHLVKAIDTAIEEESPIVGLWHSGGARLAEGVEALHAVGLVFEAMVRASGLIPQISVVLGFAAGGAAYGPALTDVVIMAPEGRVFVTGPDVVRSVTGEQVDMVSLGGPDTHTKKSGVAHIAAHDEADALHRARRLVSMMCEQGEFDQRAAELGDSDLRAMMPASAKRAYDVRPIVHEMLDNVEGESSFEELQGNYARSIVTGFGRMAGRTVGVIANNPLRLGCLNSESAEKAARFVRLCNAFGVPLVVVVDVPGYLPGVSMEWEGVVRRGAKLLHAFAEATVPRVTVVTRKIYGGAYIAMNSRALGATAVFAWPNSEVAVMGAKAAVGILHKRALAAAPDDEREALHDRLAAEHEAIAGGVDRRCRNRRRRRGNRPGEDSQHRHAALASAPSVRARHKNIPL</sequence>
<accession>Q06101</accession>
<reference key="1">
    <citation type="journal article" date="1992" name="Gene">
        <title>Sequence of a Rhodococcus gene encoding a protein with extensive homology to the mammalian propionyl-CoA carboxylase beta chain.</title>
        <authorList>
            <person name="Nagy I."/>
            <person name="Schoofs G."/>
            <person name="Vanderleyden J."/>
            <person name="de Mot R."/>
        </authorList>
    </citation>
    <scope>NUCLEOTIDE SEQUENCE [GENOMIC DNA]</scope>
    <source>
        <strain>NI86/21</strain>
    </source>
</reference>
<evidence type="ECO:0000255" key="1">
    <source>
        <dbReference type="PROSITE-ProRule" id="PRU01136"/>
    </source>
</evidence>
<evidence type="ECO:0000255" key="2">
    <source>
        <dbReference type="PROSITE-ProRule" id="PRU01137"/>
    </source>
</evidence>
<evidence type="ECO:0000255" key="3">
    <source>
        <dbReference type="PROSITE-ProRule" id="PRU01138"/>
    </source>
</evidence>
<evidence type="ECO:0000256" key="4">
    <source>
        <dbReference type="SAM" id="MobiDB-lite"/>
    </source>
</evidence>
<evidence type="ECO:0000305" key="5"/>
<feature type="chain" id="PRO_0000199802" description="Propionyl-CoA carboxylase beta chain">
    <location>
        <begin position="1"/>
        <end position="476"/>
    </location>
</feature>
<feature type="domain" description="CoA carboxyltransferase N-terminal" evidence="1">
    <location>
        <begin position="1"/>
        <end position="225"/>
    </location>
</feature>
<feature type="domain" description="CoA carboxyltransferase C-terminal" evidence="2">
    <location>
        <begin position="226"/>
        <end position="476"/>
    </location>
</feature>
<feature type="region of interest" description="Carboxyltransferase" evidence="3">
    <location>
        <begin position="1"/>
        <end position="476"/>
    </location>
</feature>
<feature type="region of interest" description="Disordered" evidence="4">
    <location>
        <begin position="439"/>
        <end position="476"/>
    </location>
</feature>
<feature type="compositionally biased region" description="Basic residues" evidence="4">
    <location>
        <begin position="439"/>
        <end position="448"/>
    </location>
</feature>
<protein>
    <recommendedName>
        <fullName>Propionyl-CoA carboxylase beta chain</fullName>
        <shortName>PCCase</shortName>
        <ecNumber>6.4.1.3</ecNumber>
    </recommendedName>
    <alternativeName>
        <fullName>Propanoyl-CoA:carbon dioxide ligase</fullName>
    </alternativeName>
</protein>
<dbReference type="EC" id="6.4.1.3"/>
<dbReference type="EMBL" id="M95713">
    <property type="protein sequence ID" value="AAB80770.1"/>
    <property type="molecule type" value="Genomic_DNA"/>
</dbReference>
<dbReference type="PIR" id="JQ1943">
    <property type="entry name" value="JQ1943"/>
</dbReference>
<dbReference type="SMR" id="Q06101"/>
<dbReference type="STRING" id="1833.XU06_17110"/>
<dbReference type="UniPathway" id="UPA00945">
    <property type="reaction ID" value="UER00908"/>
</dbReference>
<dbReference type="GO" id="GO:0009317">
    <property type="term" value="C:acetyl-CoA carboxylase complex"/>
    <property type="evidence" value="ECO:0007669"/>
    <property type="project" value="TreeGrafter"/>
</dbReference>
<dbReference type="GO" id="GO:0005524">
    <property type="term" value="F:ATP binding"/>
    <property type="evidence" value="ECO:0007669"/>
    <property type="project" value="UniProtKB-KW"/>
</dbReference>
<dbReference type="GO" id="GO:0004658">
    <property type="term" value="F:propionyl-CoA carboxylase activity"/>
    <property type="evidence" value="ECO:0007669"/>
    <property type="project" value="UniProtKB-EC"/>
</dbReference>
<dbReference type="Gene3D" id="3.90.226.10">
    <property type="entry name" value="2-enoyl-CoA Hydratase, Chain A, domain 1"/>
    <property type="match status" value="2"/>
</dbReference>
<dbReference type="InterPro" id="IPR051047">
    <property type="entry name" value="AccD/PCCB"/>
</dbReference>
<dbReference type="InterPro" id="IPR034733">
    <property type="entry name" value="AcCoA_carboxyl_beta"/>
</dbReference>
<dbReference type="InterPro" id="IPR029045">
    <property type="entry name" value="ClpP/crotonase-like_dom_sf"/>
</dbReference>
<dbReference type="InterPro" id="IPR011763">
    <property type="entry name" value="COA_CT_C"/>
</dbReference>
<dbReference type="InterPro" id="IPR011762">
    <property type="entry name" value="COA_CT_N"/>
</dbReference>
<dbReference type="PANTHER" id="PTHR43842">
    <property type="entry name" value="PROPIONYL-COA CARBOXYLASE BETA CHAIN"/>
    <property type="match status" value="1"/>
</dbReference>
<dbReference type="PANTHER" id="PTHR43842:SF2">
    <property type="entry name" value="PROPIONYL-COA CARBOXYLASE BETA CHAIN, MITOCHONDRIAL"/>
    <property type="match status" value="1"/>
</dbReference>
<dbReference type="Pfam" id="PF01039">
    <property type="entry name" value="Carboxyl_trans"/>
    <property type="match status" value="1"/>
</dbReference>
<dbReference type="SUPFAM" id="SSF52096">
    <property type="entry name" value="ClpP/crotonase"/>
    <property type="match status" value="2"/>
</dbReference>
<dbReference type="PROSITE" id="PS50989">
    <property type="entry name" value="COA_CT_CTER"/>
    <property type="match status" value="1"/>
</dbReference>
<dbReference type="PROSITE" id="PS50980">
    <property type="entry name" value="COA_CT_NTER"/>
    <property type="match status" value="1"/>
</dbReference>
<name>PCCB_RHOER</name>
<comment type="catalytic activity">
    <reaction>
        <text>propanoyl-CoA + hydrogencarbonate + ATP = (S)-methylmalonyl-CoA + ADP + phosphate + H(+)</text>
        <dbReference type="Rhea" id="RHEA:23720"/>
        <dbReference type="ChEBI" id="CHEBI:15378"/>
        <dbReference type="ChEBI" id="CHEBI:17544"/>
        <dbReference type="ChEBI" id="CHEBI:30616"/>
        <dbReference type="ChEBI" id="CHEBI:43474"/>
        <dbReference type="ChEBI" id="CHEBI:57327"/>
        <dbReference type="ChEBI" id="CHEBI:57392"/>
        <dbReference type="ChEBI" id="CHEBI:456216"/>
        <dbReference type="EC" id="6.4.1.3"/>
    </reaction>
</comment>
<comment type="pathway">
    <text>Metabolic intermediate metabolism; propanoyl-CoA degradation; succinyl-CoA from propanoyl-CoA: step 1/3.</text>
</comment>
<comment type="subunit">
    <text>Probably a dodecamer composed of six biotin-containing alpha subunits and six beta subunits.</text>
</comment>
<comment type="similarity">
    <text evidence="5">Belongs to the AccD/PCCB family.</text>
</comment>
<proteinExistence type="inferred from homology"/>
<organism>
    <name type="scientific">Rhodococcus erythropolis</name>
    <name type="common">Arthrobacter picolinophilus</name>
    <dbReference type="NCBI Taxonomy" id="1833"/>
    <lineage>
        <taxon>Bacteria</taxon>
        <taxon>Bacillati</taxon>
        <taxon>Actinomycetota</taxon>
        <taxon>Actinomycetes</taxon>
        <taxon>Mycobacteriales</taxon>
        <taxon>Nocardiaceae</taxon>
        <taxon>Rhodococcus</taxon>
        <taxon>Rhodococcus erythropolis group</taxon>
    </lineage>
</organism>
<gene>
    <name type="primary">pccB</name>
</gene>
<keyword id="KW-0067">ATP-binding</keyword>
<keyword id="KW-0436">Ligase</keyword>
<keyword id="KW-0547">Nucleotide-binding</keyword>